<dbReference type="EC" id="1.1.1.304"/>
<dbReference type="EMBL" id="BA000018">
    <property type="protein sequence ID" value="BAB41341.1"/>
    <property type="molecule type" value="Genomic_DNA"/>
</dbReference>
<dbReference type="PIR" id="B89773">
    <property type="entry name" value="B89773"/>
</dbReference>
<dbReference type="RefSeq" id="WP_000183771.1">
    <property type="nucleotide sequence ID" value="NC_002745.2"/>
</dbReference>
<dbReference type="SMR" id="P99120"/>
<dbReference type="EnsemblBacteria" id="BAB41341">
    <property type="protein sequence ID" value="BAB41341"/>
    <property type="gene ID" value="BAB41341"/>
</dbReference>
<dbReference type="KEGG" id="sau:SA0122"/>
<dbReference type="HOGENOM" id="CLU_010194_1_0_9"/>
<dbReference type="GO" id="GO:0052588">
    <property type="term" value="F:diacetyl reductase ((S)-acetoin forming) (NAD+) activity"/>
    <property type="evidence" value="ECO:0007669"/>
    <property type="project" value="UniProtKB-EC"/>
</dbReference>
<dbReference type="GO" id="GO:0045150">
    <property type="term" value="P:acetoin catabolic process"/>
    <property type="evidence" value="ECO:0007669"/>
    <property type="project" value="InterPro"/>
</dbReference>
<dbReference type="CDD" id="cd05366">
    <property type="entry name" value="meso-BDH-like_SDR_c"/>
    <property type="match status" value="1"/>
</dbReference>
<dbReference type="FunFam" id="3.40.50.720:FF:000084">
    <property type="entry name" value="Short-chain dehydrogenase reductase"/>
    <property type="match status" value="1"/>
</dbReference>
<dbReference type="Gene3D" id="3.40.50.720">
    <property type="entry name" value="NAD(P)-binding Rossmann-like Domain"/>
    <property type="match status" value="1"/>
</dbReference>
<dbReference type="InterPro" id="IPR014007">
    <property type="entry name" value="23BDH"/>
</dbReference>
<dbReference type="InterPro" id="IPR036291">
    <property type="entry name" value="NAD(P)-bd_dom_sf"/>
</dbReference>
<dbReference type="InterPro" id="IPR020904">
    <property type="entry name" value="Sc_DH/Rdtase_CS"/>
</dbReference>
<dbReference type="InterPro" id="IPR002347">
    <property type="entry name" value="SDR_fam"/>
</dbReference>
<dbReference type="NCBIfam" id="TIGR02415">
    <property type="entry name" value="23BDH"/>
    <property type="match status" value="1"/>
</dbReference>
<dbReference type="NCBIfam" id="NF005559">
    <property type="entry name" value="PRK07231.1"/>
    <property type="match status" value="1"/>
</dbReference>
<dbReference type="NCBIfam" id="NF006394">
    <property type="entry name" value="PRK08643.1"/>
    <property type="match status" value="1"/>
</dbReference>
<dbReference type="PANTHER" id="PTHR43639">
    <property type="entry name" value="OXIDOREDUCTASE, SHORT-CHAIN DEHYDROGENASE/REDUCTASE FAMILY (AFU_ORTHOLOGUE AFUA_5G02870)"/>
    <property type="match status" value="1"/>
</dbReference>
<dbReference type="PANTHER" id="PTHR43639:SF1">
    <property type="entry name" value="SHORT-CHAIN DEHYDROGENASE_REDUCTASE FAMILY PROTEIN"/>
    <property type="match status" value="1"/>
</dbReference>
<dbReference type="Pfam" id="PF00106">
    <property type="entry name" value="adh_short"/>
    <property type="match status" value="1"/>
</dbReference>
<dbReference type="PRINTS" id="PR00081">
    <property type="entry name" value="GDHRDH"/>
</dbReference>
<dbReference type="PRINTS" id="PR00080">
    <property type="entry name" value="SDRFAMILY"/>
</dbReference>
<dbReference type="SMART" id="SM00822">
    <property type="entry name" value="PKS_KR"/>
    <property type="match status" value="1"/>
</dbReference>
<dbReference type="SUPFAM" id="SSF51735">
    <property type="entry name" value="NAD(P)-binding Rossmann-fold domains"/>
    <property type="match status" value="1"/>
</dbReference>
<dbReference type="PROSITE" id="PS00061">
    <property type="entry name" value="ADH_SHORT"/>
    <property type="match status" value="1"/>
</dbReference>
<keyword id="KW-0520">NAD</keyword>
<keyword id="KW-0560">Oxidoreductase</keyword>
<comment type="function">
    <text evidence="1">Catalyzes the irreversible reduction of 2,3-butanediol to (S)-acetoin in the presence of NADH.</text>
</comment>
<comment type="catalytic activity">
    <reaction>
        <text>(S)-acetoin + NAD(+) = diacetyl + NADH + H(+)</text>
        <dbReference type="Rhea" id="RHEA:27286"/>
        <dbReference type="ChEBI" id="CHEBI:15378"/>
        <dbReference type="ChEBI" id="CHEBI:15687"/>
        <dbReference type="ChEBI" id="CHEBI:16583"/>
        <dbReference type="ChEBI" id="CHEBI:57540"/>
        <dbReference type="ChEBI" id="CHEBI:57945"/>
        <dbReference type="EC" id="1.1.1.304"/>
    </reaction>
</comment>
<comment type="similarity">
    <text evidence="3">Belongs to the short-chain dehydrogenases/reductases (SDR) family.</text>
</comment>
<organism>
    <name type="scientific">Staphylococcus aureus (strain N315)</name>
    <dbReference type="NCBI Taxonomy" id="158879"/>
    <lineage>
        <taxon>Bacteria</taxon>
        <taxon>Bacillati</taxon>
        <taxon>Bacillota</taxon>
        <taxon>Bacilli</taxon>
        <taxon>Bacillales</taxon>
        <taxon>Staphylococcaceae</taxon>
        <taxon>Staphylococcus</taxon>
    </lineage>
</organism>
<name>BUTA_STAAN</name>
<reference key="1">
    <citation type="journal article" date="2001" name="Lancet">
        <title>Whole genome sequencing of meticillin-resistant Staphylococcus aureus.</title>
        <authorList>
            <person name="Kuroda M."/>
            <person name="Ohta T."/>
            <person name="Uchiyama I."/>
            <person name="Baba T."/>
            <person name="Yuzawa H."/>
            <person name="Kobayashi I."/>
            <person name="Cui L."/>
            <person name="Oguchi A."/>
            <person name="Aoki K."/>
            <person name="Nagai Y."/>
            <person name="Lian J.-Q."/>
            <person name="Ito T."/>
            <person name="Kanamori M."/>
            <person name="Matsumaru H."/>
            <person name="Maruyama A."/>
            <person name="Murakami H."/>
            <person name="Hosoyama A."/>
            <person name="Mizutani-Ui Y."/>
            <person name="Takahashi N.K."/>
            <person name="Sawano T."/>
            <person name="Inoue R."/>
            <person name="Kaito C."/>
            <person name="Sekimizu K."/>
            <person name="Hirakawa H."/>
            <person name="Kuhara S."/>
            <person name="Goto S."/>
            <person name="Yabuzaki J."/>
            <person name="Kanehisa M."/>
            <person name="Yamashita A."/>
            <person name="Oshima K."/>
            <person name="Furuya K."/>
            <person name="Yoshino C."/>
            <person name="Shiba T."/>
            <person name="Hattori M."/>
            <person name="Ogasawara N."/>
            <person name="Hayashi H."/>
            <person name="Hiramatsu K."/>
        </authorList>
    </citation>
    <scope>NUCLEOTIDE SEQUENCE [LARGE SCALE GENOMIC DNA]</scope>
    <source>
        <strain>N315</strain>
    </source>
</reference>
<reference key="2">
    <citation type="journal article" date="2005" name="J. Microbiol. Methods">
        <title>Correlation of proteomic and transcriptomic profiles of Staphylococcus aureus during the post-exponential phase of growth.</title>
        <authorList>
            <person name="Scherl A."/>
            <person name="Francois P."/>
            <person name="Bento M."/>
            <person name="Deshusses J.M."/>
            <person name="Charbonnier Y."/>
            <person name="Converset V."/>
            <person name="Huyghe A."/>
            <person name="Walter N."/>
            <person name="Hoogland C."/>
            <person name="Appel R.D."/>
            <person name="Sanchez J.-C."/>
            <person name="Zimmermann-Ivol C.G."/>
            <person name="Corthals G.L."/>
            <person name="Hochstrasser D.F."/>
            <person name="Schrenzel J."/>
        </authorList>
    </citation>
    <scope>IDENTIFICATION BY MASS SPECTROMETRY</scope>
    <source>
        <strain>N315</strain>
    </source>
</reference>
<reference key="3">
    <citation type="submission" date="2007-10" db="UniProtKB">
        <title>Shotgun proteomic analysis of total and membrane protein extracts of S. aureus strain N315.</title>
        <authorList>
            <person name="Vaezzadeh A.R."/>
            <person name="Deshusses J."/>
            <person name="Lescuyer P."/>
            <person name="Hochstrasser D.F."/>
        </authorList>
    </citation>
    <scope>IDENTIFICATION BY MASS SPECTROMETRY [LARGE SCALE ANALYSIS]</scope>
    <source>
        <strain>N315</strain>
    </source>
</reference>
<evidence type="ECO:0000250" key="1"/>
<evidence type="ECO:0000255" key="2">
    <source>
        <dbReference type="PROSITE-ProRule" id="PRU10001"/>
    </source>
</evidence>
<evidence type="ECO:0000305" key="3"/>
<gene>
    <name type="primary">butA</name>
    <name type="ordered locus">SA0122</name>
</gene>
<proteinExistence type="evidence at protein level"/>
<feature type="chain" id="PRO_0000054541" description="Diacetyl reductase [(S)-acetoin forming]">
    <location>
        <begin position="1"/>
        <end position="258"/>
    </location>
</feature>
<feature type="active site" description="Proton acceptor" evidence="2">
    <location>
        <position position="154"/>
    </location>
</feature>
<feature type="active site" evidence="1">
    <location>
        <position position="158"/>
    </location>
</feature>
<feature type="binding site" evidence="1">
    <location>
        <begin position="8"/>
        <end position="32"/>
    </location>
    <ligand>
        <name>NAD(+)</name>
        <dbReference type="ChEBI" id="CHEBI:57540"/>
    </ligand>
</feature>
<feature type="binding site" evidence="1">
    <location>
        <position position="141"/>
    </location>
    <ligand>
        <name>substrate</name>
    </ligand>
</feature>
<protein>
    <recommendedName>
        <fullName>Diacetyl reductase [(S)-acetoin forming]</fullName>
        <ecNumber>1.1.1.304</ecNumber>
    </recommendedName>
    <alternativeName>
        <fullName>Acetoin(diacetyl) reductase</fullName>
        <shortName>AR</shortName>
    </alternativeName>
    <alternativeName>
        <fullName>Meso-2,3-butanediol dehydrogenase</fullName>
    </alternativeName>
</protein>
<accession>P99120</accession>
<accession>Q99X89</accession>
<sequence length="258" mass="27216">MTNNKVALVTGGAQGIGFKIAERLVEDGFKVAVVDFNEEGAKAAALKLSSDGTKAIAIKADVSNRDDVFNAVRQTAAQFGDFHVMVNNAGLGPTTPIDTITEEQFKTVYGVNVAGVLWGIQAAHEQFKKFNHGGKIINATSQAGVEGNPGLSLYCSTKFAVRGLTQVAAQDLASEGITVNAFAPGIVQTPMMESIAVATAEEAGKPEAWGWEQFTSQIALGRVSQPEDVSNVVSFLAGKDSDYITGQTIIVDGGMRFR</sequence>